<reference key="1">
    <citation type="journal article" date="2010" name="Stand. Genomic Sci.">
        <title>Complete genome sequence of Rhizobium leguminosarum bv trifolii strain WSM2304, an effective microsymbiont of the South American clover Trifolium polymorphum.</title>
        <authorList>
            <person name="Reeve W."/>
            <person name="O'Hara G."/>
            <person name="Chain P."/>
            <person name="Ardley J."/>
            <person name="Brau L."/>
            <person name="Nandesena K."/>
            <person name="Tiwari R."/>
            <person name="Malfatti S."/>
            <person name="Kiss H."/>
            <person name="Lapidus A."/>
            <person name="Copeland A."/>
            <person name="Nolan M."/>
            <person name="Land M."/>
            <person name="Ivanova N."/>
            <person name="Mavromatis K."/>
            <person name="Markowitz V."/>
            <person name="Kyrpides N."/>
            <person name="Melino V."/>
            <person name="Denton M."/>
            <person name="Yates R."/>
            <person name="Howieson J."/>
        </authorList>
    </citation>
    <scope>NUCLEOTIDE SEQUENCE [LARGE SCALE GENOMIC DNA]</scope>
    <source>
        <strain>WSM2304</strain>
    </source>
</reference>
<comment type="function">
    <text evidence="1">Part of the Sec protein translocase complex. Interacts with the SecYEG preprotein conducting channel. Has a central role in coupling the hydrolysis of ATP to the transfer of proteins into and across the cell membrane, serving both as a receptor for the preprotein-SecB complex and as an ATP-driven molecular motor driving the stepwise translocation of polypeptide chains across the membrane.</text>
</comment>
<comment type="catalytic activity">
    <reaction evidence="1">
        <text>ATP + H2O + cellular proteinSide 1 = ADP + phosphate + cellular proteinSide 2.</text>
        <dbReference type="EC" id="7.4.2.8"/>
    </reaction>
</comment>
<comment type="cofactor">
    <cofactor evidence="1">
        <name>Zn(2+)</name>
        <dbReference type="ChEBI" id="CHEBI:29105"/>
    </cofactor>
    <text evidence="1">May bind 1 zinc ion per subunit.</text>
</comment>
<comment type="subunit">
    <text evidence="1">Monomer and homodimer. Part of the essential Sec protein translocation apparatus which comprises SecA, SecYEG and auxiliary proteins SecDF-YajC and YidC.</text>
</comment>
<comment type="subcellular location">
    <subcellularLocation>
        <location evidence="1">Cell inner membrane</location>
        <topology evidence="1">Peripheral membrane protein</topology>
        <orientation evidence="1">Cytoplasmic side</orientation>
    </subcellularLocation>
    <subcellularLocation>
        <location evidence="1">Cytoplasm</location>
    </subcellularLocation>
    <text evidence="1">Distribution is 50-50.</text>
</comment>
<comment type="similarity">
    <text evidence="1">Belongs to the SecA family.</text>
</comment>
<gene>
    <name evidence="1" type="primary">secA</name>
    <name type="ordered locus">Rleg2_3540</name>
</gene>
<evidence type="ECO:0000255" key="1">
    <source>
        <dbReference type="HAMAP-Rule" id="MF_01382"/>
    </source>
</evidence>
<proteinExistence type="inferred from homology"/>
<protein>
    <recommendedName>
        <fullName evidence="1">Protein translocase subunit SecA</fullName>
        <ecNumber evidence="1">7.4.2.8</ecNumber>
    </recommendedName>
</protein>
<organism>
    <name type="scientific">Rhizobium leguminosarum bv. trifolii (strain WSM2304)</name>
    <dbReference type="NCBI Taxonomy" id="395492"/>
    <lineage>
        <taxon>Bacteria</taxon>
        <taxon>Pseudomonadati</taxon>
        <taxon>Pseudomonadota</taxon>
        <taxon>Alphaproteobacteria</taxon>
        <taxon>Hyphomicrobiales</taxon>
        <taxon>Rhizobiaceae</taxon>
        <taxon>Rhizobium/Agrobacterium group</taxon>
        <taxon>Rhizobium</taxon>
    </lineage>
</organism>
<keyword id="KW-0067">ATP-binding</keyword>
<keyword id="KW-0997">Cell inner membrane</keyword>
<keyword id="KW-1003">Cell membrane</keyword>
<keyword id="KW-0963">Cytoplasm</keyword>
<keyword id="KW-0472">Membrane</keyword>
<keyword id="KW-0479">Metal-binding</keyword>
<keyword id="KW-0547">Nucleotide-binding</keyword>
<keyword id="KW-0653">Protein transport</keyword>
<keyword id="KW-1185">Reference proteome</keyword>
<keyword id="KW-1278">Translocase</keyword>
<keyword id="KW-0811">Translocation</keyword>
<keyword id="KW-0813">Transport</keyword>
<keyword id="KW-0862">Zinc</keyword>
<accession>B5ZRT0</accession>
<name>SECA_RHILW</name>
<feature type="chain" id="PRO_1000145050" description="Protein translocase subunit SecA">
    <location>
        <begin position="1"/>
        <end position="905"/>
    </location>
</feature>
<feature type="binding site" evidence="1">
    <location>
        <position position="89"/>
    </location>
    <ligand>
        <name>ATP</name>
        <dbReference type="ChEBI" id="CHEBI:30616"/>
    </ligand>
</feature>
<feature type="binding site" evidence="1">
    <location>
        <begin position="107"/>
        <end position="111"/>
    </location>
    <ligand>
        <name>ATP</name>
        <dbReference type="ChEBI" id="CHEBI:30616"/>
    </ligand>
</feature>
<feature type="binding site" evidence="1">
    <location>
        <position position="502"/>
    </location>
    <ligand>
        <name>ATP</name>
        <dbReference type="ChEBI" id="CHEBI:30616"/>
    </ligand>
</feature>
<feature type="binding site" evidence="1">
    <location>
        <position position="887"/>
    </location>
    <ligand>
        <name>Zn(2+)</name>
        <dbReference type="ChEBI" id="CHEBI:29105"/>
    </ligand>
</feature>
<feature type="binding site" evidence="1">
    <location>
        <position position="889"/>
    </location>
    <ligand>
        <name>Zn(2+)</name>
        <dbReference type="ChEBI" id="CHEBI:29105"/>
    </ligand>
</feature>
<feature type="binding site" evidence="1">
    <location>
        <position position="898"/>
    </location>
    <ligand>
        <name>Zn(2+)</name>
        <dbReference type="ChEBI" id="CHEBI:29105"/>
    </ligand>
</feature>
<feature type="binding site" evidence="1">
    <location>
        <position position="899"/>
    </location>
    <ligand>
        <name>Zn(2+)</name>
        <dbReference type="ChEBI" id="CHEBI:29105"/>
    </ligand>
</feature>
<dbReference type="EC" id="7.4.2.8" evidence="1"/>
<dbReference type="EMBL" id="CP001191">
    <property type="protein sequence ID" value="ACI56807.1"/>
    <property type="molecule type" value="Genomic_DNA"/>
</dbReference>
<dbReference type="RefSeq" id="WP_012559104.1">
    <property type="nucleotide sequence ID" value="NC_011369.1"/>
</dbReference>
<dbReference type="SMR" id="B5ZRT0"/>
<dbReference type="STRING" id="395492.Rleg2_3540"/>
<dbReference type="KEGG" id="rlt:Rleg2_3540"/>
<dbReference type="eggNOG" id="COG0653">
    <property type="taxonomic scope" value="Bacteria"/>
</dbReference>
<dbReference type="HOGENOM" id="CLU_005314_3_0_5"/>
<dbReference type="Proteomes" id="UP000008330">
    <property type="component" value="Chromosome"/>
</dbReference>
<dbReference type="GO" id="GO:0031522">
    <property type="term" value="C:cell envelope Sec protein transport complex"/>
    <property type="evidence" value="ECO:0007669"/>
    <property type="project" value="TreeGrafter"/>
</dbReference>
<dbReference type="GO" id="GO:0005829">
    <property type="term" value="C:cytosol"/>
    <property type="evidence" value="ECO:0007669"/>
    <property type="project" value="TreeGrafter"/>
</dbReference>
<dbReference type="GO" id="GO:0005886">
    <property type="term" value="C:plasma membrane"/>
    <property type="evidence" value="ECO:0007669"/>
    <property type="project" value="UniProtKB-SubCell"/>
</dbReference>
<dbReference type="GO" id="GO:0005524">
    <property type="term" value="F:ATP binding"/>
    <property type="evidence" value="ECO:0007669"/>
    <property type="project" value="UniProtKB-UniRule"/>
</dbReference>
<dbReference type="GO" id="GO:0046872">
    <property type="term" value="F:metal ion binding"/>
    <property type="evidence" value="ECO:0007669"/>
    <property type="project" value="UniProtKB-KW"/>
</dbReference>
<dbReference type="GO" id="GO:0008564">
    <property type="term" value="F:protein-exporting ATPase activity"/>
    <property type="evidence" value="ECO:0007669"/>
    <property type="project" value="UniProtKB-EC"/>
</dbReference>
<dbReference type="GO" id="GO:0065002">
    <property type="term" value="P:intracellular protein transmembrane transport"/>
    <property type="evidence" value="ECO:0007669"/>
    <property type="project" value="UniProtKB-UniRule"/>
</dbReference>
<dbReference type="GO" id="GO:0017038">
    <property type="term" value="P:protein import"/>
    <property type="evidence" value="ECO:0007669"/>
    <property type="project" value="InterPro"/>
</dbReference>
<dbReference type="GO" id="GO:0006605">
    <property type="term" value="P:protein targeting"/>
    <property type="evidence" value="ECO:0007669"/>
    <property type="project" value="UniProtKB-UniRule"/>
</dbReference>
<dbReference type="GO" id="GO:0043952">
    <property type="term" value="P:protein transport by the Sec complex"/>
    <property type="evidence" value="ECO:0007669"/>
    <property type="project" value="TreeGrafter"/>
</dbReference>
<dbReference type="CDD" id="cd17928">
    <property type="entry name" value="DEXDc_SecA"/>
    <property type="match status" value="1"/>
</dbReference>
<dbReference type="CDD" id="cd18803">
    <property type="entry name" value="SF2_C_secA"/>
    <property type="match status" value="1"/>
</dbReference>
<dbReference type="FunFam" id="3.90.1440.10:FF:000001">
    <property type="entry name" value="Preprotein translocase subunit SecA"/>
    <property type="match status" value="1"/>
</dbReference>
<dbReference type="FunFam" id="1.10.3060.10:FF:000003">
    <property type="entry name" value="Protein translocase subunit SecA"/>
    <property type="match status" value="1"/>
</dbReference>
<dbReference type="FunFam" id="3.40.50.300:FF:000334">
    <property type="entry name" value="Protein translocase subunit SecA"/>
    <property type="match status" value="1"/>
</dbReference>
<dbReference type="FunFam" id="3.40.50.300:FF:001790">
    <property type="entry name" value="Protein translocase subunit SecA"/>
    <property type="match status" value="1"/>
</dbReference>
<dbReference type="Gene3D" id="3.10.450.50">
    <property type="match status" value="1"/>
</dbReference>
<dbReference type="Gene3D" id="1.10.3060.10">
    <property type="entry name" value="Helical scaffold and wing domains of SecA"/>
    <property type="match status" value="1"/>
</dbReference>
<dbReference type="Gene3D" id="3.40.50.300">
    <property type="entry name" value="P-loop containing nucleotide triphosphate hydrolases"/>
    <property type="match status" value="2"/>
</dbReference>
<dbReference type="Gene3D" id="3.90.1440.10">
    <property type="entry name" value="SecA, preprotein cross-linking domain"/>
    <property type="match status" value="1"/>
</dbReference>
<dbReference type="HAMAP" id="MF_01382">
    <property type="entry name" value="SecA"/>
    <property type="match status" value="1"/>
</dbReference>
<dbReference type="InterPro" id="IPR014001">
    <property type="entry name" value="Helicase_ATP-bd"/>
</dbReference>
<dbReference type="InterPro" id="IPR027417">
    <property type="entry name" value="P-loop_NTPase"/>
</dbReference>
<dbReference type="InterPro" id="IPR004027">
    <property type="entry name" value="SEC_C_motif"/>
</dbReference>
<dbReference type="InterPro" id="IPR000185">
    <property type="entry name" value="SecA"/>
</dbReference>
<dbReference type="InterPro" id="IPR020937">
    <property type="entry name" value="SecA_CS"/>
</dbReference>
<dbReference type="InterPro" id="IPR011115">
    <property type="entry name" value="SecA_DEAD"/>
</dbReference>
<dbReference type="InterPro" id="IPR014018">
    <property type="entry name" value="SecA_motor_DEAD"/>
</dbReference>
<dbReference type="InterPro" id="IPR011130">
    <property type="entry name" value="SecA_preprotein_X-link_dom"/>
</dbReference>
<dbReference type="InterPro" id="IPR044722">
    <property type="entry name" value="SecA_SF2_C"/>
</dbReference>
<dbReference type="InterPro" id="IPR011116">
    <property type="entry name" value="SecA_Wing/Scaffold"/>
</dbReference>
<dbReference type="InterPro" id="IPR036266">
    <property type="entry name" value="SecA_Wing/Scaffold_sf"/>
</dbReference>
<dbReference type="InterPro" id="IPR036670">
    <property type="entry name" value="SecA_X-link_sf"/>
</dbReference>
<dbReference type="NCBIfam" id="NF009538">
    <property type="entry name" value="PRK12904.1"/>
    <property type="match status" value="1"/>
</dbReference>
<dbReference type="NCBIfam" id="TIGR00963">
    <property type="entry name" value="secA"/>
    <property type="match status" value="1"/>
</dbReference>
<dbReference type="PANTHER" id="PTHR30612:SF0">
    <property type="entry name" value="CHLOROPLAST PROTEIN-TRANSPORTING ATPASE"/>
    <property type="match status" value="1"/>
</dbReference>
<dbReference type="PANTHER" id="PTHR30612">
    <property type="entry name" value="SECA INNER MEMBRANE COMPONENT OF SEC PROTEIN SECRETION SYSTEM"/>
    <property type="match status" value="1"/>
</dbReference>
<dbReference type="Pfam" id="PF21090">
    <property type="entry name" value="P-loop_SecA"/>
    <property type="match status" value="1"/>
</dbReference>
<dbReference type="Pfam" id="PF02810">
    <property type="entry name" value="SEC-C"/>
    <property type="match status" value="1"/>
</dbReference>
<dbReference type="Pfam" id="PF07517">
    <property type="entry name" value="SecA_DEAD"/>
    <property type="match status" value="1"/>
</dbReference>
<dbReference type="Pfam" id="PF01043">
    <property type="entry name" value="SecA_PP_bind"/>
    <property type="match status" value="1"/>
</dbReference>
<dbReference type="Pfam" id="PF07516">
    <property type="entry name" value="SecA_SW"/>
    <property type="match status" value="1"/>
</dbReference>
<dbReference type="PRINTS" id="PR00906">
    <property type="entry name" value="SECA"/>
</dbReference>
<dbReference type="SMART" id="SM00957">
    <property type="entry name" value="SecA_DEAD"/>
    <property type="match status" value="1"/>
</dbReference>
<dbReference type="SMART" id="SM00958">
    <property type="entry name" value="SecA_PP_bind"/>
    <property type="match status" value="1"/>
</dbReference>
<dbReference type="SUPFAM" id="SSF81886">
    <property type="entry name" value="Helical scaffold and wing domains of SecA"/>
    <property type="match status" value="1"/>
</dbReference>
<dbReference type="SUPFAM" id="SSF52540">
    <property type="entry name" value="P-loop containing nucleoside triphosphate hydrolases"/>
    <property type="match status" value="2"/>
</dbReference>
<dbReference type="SUPFAM" id="SSF81767">
    <property type="entry name" value="Pre-protein crosslinking domain of SecA"/>
    <property type="match status" value="1"/>
</dbReference>
<dbReference type="PROSITE" id="PS01312">
    <property type="entry name" value="SECA"/>
    <property type="match status" value="1"/>
</dbReference>
<dbReference type="PROSITE" id="PS51196">
    <property type="entry name" value="SECA_MOTOR_DEAD"/>
    <property type="match status" value="1"/>
</dbReference>
<sequence length="905" mass="102189">MVSFGGIARKLFGSSNDRRVRSFQPNVAAINSIEEKTKALTDEQLAAKTVEFRALLAEGKTLDDILIPAFAVVREASRRVLGLRPFDVQLVGGMILHSNAIAEMKTGEGKTLVATLPVYLNALSGKGVHVVTVNDYLAQRDAATMGRVYSFLGMTTGVIVHGLSDEERHAAYACDITYATNNELGFDYLRDNMKYEKNQMVQRGHNFAIVDEVDSILVDEARTPLIISGPLDDRSELYNTIDAFIPLLVPSDYEIDEKQRSANFSEEGTEKLENLLRQAGLLKGNALYDIENVAIVHHVNNALKAHKLFQRDKDYIVRNDEVVIIDEFTGRMMPGRRYSEGQHQALEAKERVQIQPENQTLASITFQNYFRMYAKLAGMTGTAQTEAEEFANIYNLDVIEVPTNLPIKRIDEDDEVYRTFDEKFKAIIEEILDAHKRGQPVLVGTTSIEKSELLAERLRKQGFDDFQVLNARYHEQEAYIVAQAGVPGAITIATNMAGRGTDIQLGGNLDMRIERELGEVEAGPEREARIQAIVEEIKELKQKALAAGGLYVIATERHESRRIDNQLRGRSGRQGDPGRSKFYLSLQDDLMRIFGSDRMDSMLTKLGLKEGEAIVHPWINKALERAQKKVEARNFDIRKNLLKYDDVLNDQRKVIFEQRLELMESTNISETVSDMRREVIEDLVDKHIPERAYAEQWDAAGLKTGALNILNLDLPIEDWVKEEGIGEDDIRERLTQATNAAFTEKAERFGDDIMHYVERSIVMQTLDHLWREHIVNLDHLRSVIGFRGYAQRDPLQEYKSEAFELFTSLLNNLREAVTAQLMRVELVQQAPAEPEPPLMQAHHLDPTTGEDDFAPAIYQASEVIVSPENRNPDDPATWGKVGRNETCPCGSGKKYKHCHGAFEQV</sequence>